<organism>
    <name type="scientific">Bathyraja eatonii</name>
    <name type="common">Eaton's skate</name>
    <name type="synonym">Raja eatonii</name>
    <dbReference type="NCBI Taxonomy" id="298348"/>
    <lineage>
        <taxon>Eukaryota</taxon>
        <taxon>Metazoa</taxon>
        <taxon>Chordata</taxon>
        <taxon>Craniata</taxon>
        <taxon>Vertebrata</taxon>
        <taxon>Chondrichthyes</taxon>
        <taxon>Elasmobranchii</taxon>
        <taxon>Batoidea</taxon>
        <taxon>Rajiformes</taxon>
        <taxon>Bathyraja</taxon>
    </lineage>
</organism>
<gene>
    <name type="primary">HBA</name>
</gene>
<reference key="1">
    <citation type="journal article" date="2005" name="Biochem. J.">
        <title>Structure, function and molecular adaptations of haemoglobins of the polar cartilaginous fish Bathyraja eatonii and Raja hyperborea.</title>
        <authorList>
            <person name="Verde C."/>
            <person name="De Rosa M.C."/>
            <person name="Giordano D."/>
            <person name="Mosca D."/>
            <person name="De Pascale D."/>
            <person name="Raiola L."/>
            <person name="Cocca E."/>
            <person name="Carratore V."/>
            <person name="Giardina B."/>
            <person name="Di Prisco G."/>
        </authorList>
    </citation>
    <scope>PROTEIN SEQUENCE OF 2-142</scope>
    <source>
        <tissue>Erythrocyte</tissue>
    </source>
</reference>
<accession>P84216</accession>
<sequence length="142" mass="15804">MVLSDANKQEIHHVAELIKPHAEAVGADALARLFELHPQTKTYFPNFSGYHATDAPVKAHGAKVINAVLKAAEHLDDLPKHLEKLATKHGHELLVDPHNFVLFSDIIVVTLATKLPTFSPATHRAIDKFLEELVHQLSSKYR</sequence>
<keyword id="KW-0903">Direct protein sequencing</keyword>
<keyword id="KW-0349">Heme</keyword>
<keyword id="KW-0408">Iron</keyword>
<keyword id="KW-0479">Metal-binding</keyword>
<keyword id="KW-0561">Oxygen transport</keyword>
<keyword id="KW-0813">Transport</keyword>
<dbReference type="SMR" id="P84216"/>
<dbReference type="GO" id="GO:0072562">
    <property type="term" value="C:blood microparticle"/>
    <property type="evidence" value="ECO:0007669"/>
    <property type="project" value="TreeGrafter"/>
</dbReference>
<dbReference type="GO" id="GO:0031838">
    <property type="term" value="C:haptoglobin-hemoglobin complex"/>
    <property type="evidence" value="ECO:0007669"/>
    <property type="project" value="TreeGrafter"/>
</dbReference>
<dbReference type="GO" id="GO:0005833">
    <property type="term" value="C:hemoglobin complex"/>
    <property type="evidence" value="ECO:0007669"/>
    <property type="project" value="InterPro"/>
</dbReference>
<dbReference type="GO" id="GO:0031720">
    <property type="term" value="F:haptoglobin binding"/>
    <property type="evidence" value="ECO:0007669"/>
    <property type="project" value="TreeGrafter"/>
</dbReference>
<dbReference type="GO" id="GO:0020037">
    <property type="term" value="F:heme binding"/>
    <property type="evidence" value="ECO:0007669"/>
    <property type="project" value="InterPro"/>
</dbReference>
<dbReference type="GO" id="GO:0046872">
    <property type="term" value="F:metal ion binding"/>
    <property type="evidence" value="ECO:0007669"/>
    <property type="project" value="UniProtKB-KW"/>
</dbReference>
<dbReference type="GO" id="GO:0043177">
    <property type="term" value="F:organic acid binding"/>
    <property type="evidence" value="ECO:0007669"/>
    <property type="project" value="TreeGrafter"/>
</dbReference>
<dbReference type="GO" id="GO:0019825">
    <property type="term" value="F:oxygen binding"/>
    <property type="evidence" value="ECO:0007669"/>
    <property type="project" value="InterPro"/>
</dbReference>
<dbReference type="GO" id="GO:0005344">
    <property type="term" value="F:oxygen carrier activity"/>
    <property type="evidence" value="ECO:0007669"/>
    <property type="project" value="UniProtKB-KW"/>
</dbReference>
<dbReference type="GO" id="GO:0004601">
    <property type="term" value="F:peroxidase activity"/>
    <property type="evidence" value="ECO:0007669"/>
    <property type="project" value="TreeGrafter"/>
</dbReference>
<dbReference type="GO" id="GO:0042744">
    <property type="term" value="P:hydrogen peroxide catabolic process"/>
    <property type="evidence" value="ECO:0007669"/>
    <property type="project" value="TreeGrafter"/>
</dbReference>
<dbReference type="CDD" id="cd08927">
    <property type="entry name" value="Hb-alpha-like"/>
    <property type="match status" value="1"/>
</dbReference>
<dbReference type="Gene3D" id="1.10.490.10">
    <property type="entry name" value="Globins"/>
    <property type="match status" value="1"/>
</dbReference>
<dbReference type="InterPro" id="IPR000971">
    <property type="entry name" value="Globin"/>
</dbReference>
<dbReference type="InterPro" id="IPR009050">
    <property type="entry name" value="Globin-like_sf"/>
</dbReference>
<dbReference type="InterPro" id="IPR012292">
    <property type="entry name" value="Globin/Proto"/>
</dbReference>
<dbReference type="InterPro" id="IPR002338">
    <property type="entry name" value="Hemoglobin_a-typ"/>
</dbReference>
<dbReference type="InterPro" id="IPR050056">
    <property type="entry name" value="Hemoglobin_oxygen_transport"/>
</dbReference>
<dbReference type="PANTHER" id="PTHR11442">
    <property type="entry name" value="HEMOGLOBIN FAMILY MEMBER"/>
    <property type="match status" value="1"/>
</dbReference>
<dbReference type="Pfam" id="PF00042">
    <property type="entry name" value="Globin"/>
    <property type="match status" value="1"/>
</dbReference>
<dbReference type="PRINTS" id="PR00612">
    <property type="entry name" value="ALPHAHAEM"/>
</dbReference>
<dbReference type="SUPFAM" id="SSF46458">
    <property type="entry name" value="Globin-like"/>
    <property type="match status" value="1"/>
</dbReference>
<dbReference type="PROSITE" id="PS01033">
    <property type="entry name" value="GLOBIN"/>
    <property type="match status" value="1"/>
</dbReference>
<name>HBA_BATEA</name>
<proteinExistence type="evidence at protein level"/>
<comment type="function">
    <text>Involved in oxygen transport from gills to the various peripheral tissues.</text>
</comment>
<comment type="subunit">
    <text>Heterotetramer of two alpha chains and two beta chains.</text>
</comment>
<comment type="tissue specificity">
    <text>Red blood cells.</text>
</comment>
<comment type="similarity">
    <text evidence="2">Belongs to the globin family.</text>
</comment>
<feature type="initiator methionine" description="Removed" evidence="1">
    <location>
        <position position="1"/>
    </location>
</feature>
<feature type="chain" id="PRO_0000052563" description="Hemoglobin subunit alpha">
    <location>
        <begin position="2"/>
        <end position="142"/>
    </location>
</feature>
<feature type="domain" description="Globin" evidence="2">
    <location>
        <begin position="2"/>
        <end position="142"/>
    </location>
</feature>
<feature type="binding site" evidence="2">
    <location>
        <position position="60"/>
    </location>
    <ligand>
        <name>O2</name>
        <dbReference type="ChEBI" id="CHEBI:15379"/>
    </ligand>
</feature>
<feature type="binding site" description="proximal binding residue" evidence="2">
    <location>
        <position position="89"/>
    </location>
    <ligand>
        <name>heme b</name>
        <dbReference type="ChEBI" id="CHEBI:60344"/>
    </ligand>
    <ligandPart>
        <name>Fe</name>
        <dbReference type="ChEBI" id="CHEBI:18248"/>
    </ligandPart>
</feature>
<protein>
    <recommendedName>
        <fullName>Hemoglobin subunit alpha</fullName>
    </recommendedName>
    <alternativeName>
        <fullName>Alpha-globin</fullName>
    </alternativeName>
    <alternativeName>
        <fullName>Hemoglobin alpha chain</fullName>
    </alternativeName>
</protein>
<evidence type="ECO:0000250" key="1"/>
<evidence type="ECO:0000255" key="2">
    <source>
        <dbReference type="PROSITE-ProRule" id="PRU00238"/>
    </source>
</evidence>